<proteinExistence type="inferred from homology"/>
<reference key="1">
    <citation type="journal article" date="2008" name="Biol. Direct">
        <title>Complete genome sequence of the extremely acidophilic methanotroph isolate V4, Methylacidiphilum infernorum, a representative of the bacterial phylum Verrucomicrobia.</title>
        <authorList>
            <person name="Hou S."/>
            <person name="Makarova K.S."/>
            <person name="Saw J.H."/>
            <person name="Senin P."/>
            <person name="Ly B.V."/>
            <person name="Zhou Z."/>
            <person name="Ren Y."/>
            <person name="Wang J."/>
            <person name="Galperin M.Y."/>
            <person name="Omelchenko M.V."/>
            <person name="Wolf Y.I."/>
            <person name="Yutin N."/>
            <person name="Koonin E.V."/>
            <person name="Stott M.B."/>
            <person name="Mountain B.W."/>
            <person name="Crowe M.A."/>
            <person name="Smirnova A.V."/>
            <person name="Dunfield P.F."/>
            <person name="Feng L."/>
            <person name="Wang L."/>
            <person name="Alam M."/>
        </authorList>
    </citation>
    <scope>NUCLEOTIDE SEQUENCE [LARGE SCALE GENOMIC DNA]</scope>
    <source>
        <strain>Isolate V4</strain>
    </source>
</reference>
<reference key="2">
    <citation type="journal article" date="2007" name="Nature">
        <title>Methane oxidation by an extremely acidophilic bacterium of the phylum Verrucomicrobia.</title>
        <authorList>
            <person name="Dunfield P.F."/>
            <person name="Yuryev A."/>
            <person name="Senin P."/>
            <person name="Smirnova A.V."/>
            <person name="Stott M.B."/>
            <person name="Hou S."/>
            <person name="Ly B."/>
            <person name="Saw J.H."/>
            <person name="Zhou Z."/>
            <person name="Ren Y."/>
            <person name="Wang J."/>
            <person name="Mountain B.W."/>
            <person name="Crowe M.A."/>
            <person name="Weatherby T.M."/>
            <person name="Bodelier P.L.E."/>
            <person name="Liesack W."/>
            <person name="Feng L."/>
            <person name="Wang L."/>
            <person name="Alam M."/>
        </authorList>
    </citation>
    <scope>NUCLEOTIDE SEQUENCE [GENOMIC DNA] OF 6-356</scope>
</reference>
<name>F16PA_METI4</name>
<comment type="catalytic activity">
    <reaction evidence="1">
        <text>beta-D-fructose 1,6-bisphosphate + H2O = beta-D-fructose 6-phosphate + phosphate</text>
        <dbReference type="Rhea" id="RHEA:11064"/>
        <dbReference type="ChEBI" id="CHEBI:15377"/>
        <dbReference type="ChEBI" id="CHEBI:32966"/>
        <dbReference type="ChEBI" id="CHEBI:43474"/>
        <dbReference type="ChEBI" id="CHEBI:57634"/>
        <dbReference type="EC" id="3.1.3.11"/>
    </reaction>
</comment>
<comment type="cofactor">
    <cofactor evidence="1">
        <name>Mg(2+)</name>
        <dbReference type="ChEBI" id="CHEBI:18420"/>
    </cofactor>
    <text evidence="1">Binds 2 magnesium ions per subunit.</text>
</comment>
<comment type="pathway">
    <text evidence="1">Carbohydrate biosynthesis; gluconeogenesis.</text>
</comment>
<comment type="subunit">
    <text evidence="1">Homotetramer.</text>
</comment>
<comment type="subcellular location">
    <subcellularLocation>
        <location evidence="1">Cytoplasm</location>
    </subcellularLocation>
</comment>
<comment type="similarity">
    <text evidence="1">Belongs to the FBPase class 1 family.</text>
</comment>
<sequence>MSYHRMTLSKFLLEQRKKGVIDPDLGSLINDIESACKYVAAAVSKGKLISQEVNVTINVQGEEQKPLDVIANEIFLKICEQGDQLQGMVSEEMESPYIIPPEHRRGKYLLIYDPLDGSSNLDVNLTVGSIFSVLKAPESGEPLEEKHFLRPGREQLAAGFTLYGPSVMFILTLGNGVHGFTLDREVGIFTLTHPDMRITPSTKEFAINASNERFWEPPVRRYVEECIKGKTGPRGKDFNMRWIASMVAEVYRILIRGGLFMYPRDTKDLSKPGRLRLLYEANPMGFIVEQAGGMISTGRESILDIVPRSLHQRIAVILGSKEEVELLNRYHNDYDSGKQEEFESPLFSTRSLFRNP</sequence>
<gene>
    <name evidence="1" type="primary">fbp</name>
    <name type="ordered locus">Minf_1684</name>
</gene>
<organism>
    <name type="scientific">Methylacidiphilum infernorum (isolate V4)</name>
    <name type="common">Methylokorus infernorum (strain V4)</name>
    <dbReference type="NCBI Taxonomy" id="481448"/>
    <lineage>
        <taxon>Bacteria</taxon>
        <taxon>Pseudomonadati</taxon>
        <taxon>Verrucomicrobiota</taxon>
        <taxon>Methylacidiphilae</taxon>
        <taxon>Methylacidiphilales</taxon>
        <taxon>Methylacidiphilaceae</taxon>
        <taxon>Methylacidiphilum (ex Ratnadevi et al. 2023)</taxon>
    </lineage>
</organism>
<accession>B3DWS5</accession>
<accession>A9QPD3</accession>
<dbReference type="EC" id="3.1.3.11" evidence="1"/>
<dbReference type="EMBL" id="CP000975">
    <property type="protein sequence ID" value="ACD83738.1"/>
    <property type="molecule type" value="Genomic_DNA"/>
</dbReference>
<dbReference type="EMBL" id="EU223849">
    <property type="protein sequence ID" value="ABX56591.1"/>
    <property type="molecule type" value="Genomic_DNA"/>
</dbReference>
<dbReference type="RefSeq" id="WP_012464020.1">
    <property type="nucleotide sequence ID" value="NC_010794.1"/>
</dbReference>
<dbReference type="SMR" id="B3DWS5"/>
<dbReference type="STRING" id="481448.Minf_1684"/>
<dbReference type="KEGG" id="min:Minf_1684"/>
<dbReference type="eggNOG" id="COG0158">
    <property type="taxonomic scope" value="Bacteria"/>
</dbReference>
<dbReference type="HOGENOM" id="CLU_039977_0_0_0"/>
<dbReference type="OrthoDB" id="9806756at2"/>
<dbReference type="UniPathway" id="UPA00138"/>
<dbReference type="Proteomes" id="UP000009149">
    <property type="component" value="Chromosome"/>
</dbReference>
<dbReference type="GO" id="GO:0005829">
    <property type="term" value="C:cytosol"/>
    <property type="evidence" value="ECO:0007669"/>
    <property type="project" value="TreeGrafter"/>
</dbReference>
<dbReference type="GO" id="GO:0042132">
    <property type="term" value="F:fructose 1,6-bisphosphate 1-phosphatase activity"/>
    <property type="evidence" value="ECO:0007669"/>
    <property type="project" value="UniProtKB-UniRule"/>
</dbReference>
<dbReference type="GO" id="GO:0000287">
    <property type="term" value="F:magnesium ion binding"/>
    <property type="evidence" value="ECO:0007669"/>
    <property type="project" value="UniProtKB-UniRule"/>
</dbReference>
<dbReference type="GO" id="GO:0030388">
    <property type="term" value="P:fructose 1,6-bisphosphate metabolic process"/>
    <property type="evidence" value="ECO:0007669"/>
    <property type="project" value="TreeGrafter"/>
</dbReference>
<dbReference type="GO" id="GO:0006002">
    <property type="term" value="P:fructose 6-phosphate metabolic process"/>
    <property type="evidence" value="ECO:0007669"/>
    <property type="project" value="TreeGrafter"/>
</dbReference>
<dbReference type="GO" id="GO:0006000">
    <property type="term" value="P:fructose metabolic process"/>
    <property type="evidence" value="ECO:0007669"/>
    <property type="project" value="TreeGrafter"/>
</dbReference>
<dbReference type="GO" id="GO:0006094">
    <property type="term" value="P:gluconeogenesis"/>
    <property type="evidence" value="ECO:0007669"/>
    <property type="project" value="UniProtKB-UniRule"/>
</dbReference>
<dbReference type="GO" id="GO:0005986">
    <property type="term" value="P:sucrose biosynthetic process"/>
    <property type="evidence" value="ECO:0007669"/>
    <property type="project" value="TreeGrafter"/>
</dbReference>
<dbReference type="CDD" id="cd00354">
    <property type="entry name" value="FBPase"/>
    <property type="match status" value="1"/>
</dbReference>
<dbReference type="FunFam" id="3.40.190.80:FF:000011">
    <property type="entry name" value="Fructose-1,6-bisphosphatase class 1"/>
    <property type="match status" value="1"/>
</dbReference>
<dbReference type="Gene3D" id="3.40.190.80">
    <property type="match status" value="1"/>
</dbReference>
<dbReference type="Gene3D" id="3.30.540.10">
    <property type="entry name" value="Fructose-1,6-Bisphosphatase, subunit A, domain 1"/>
    <property type="match status" value="1"/>
</dbReference>
<dbReference type="HAMAP" id="MF_01855">
    <property type="entry name" value="FBPase_class1"/>
    <property type="match status" value="1"/>
</dbReference>
<dbReference type="InterPro" id="IPR044015">
    <property type="entry name" value="FBPase_C_dom"/>
</dbReference>
<dbReference type="InterPro" id="IPR000146">
    <property type="entry name" value="FBPase_class-1"/>
</dbReference>
<dbReference type="InterPro" id="IPR033391">
    <property type="entry name" value="FBPase_N"/>
</dbReference>
<dbReference type="InterPro" id="IPR028343">
    <property type="entry name" value="FBPtase"/>
</dbReference>
<dbReference type="InterPro" id="IPR020548">
    <property type="entry name" value="Fructose_bisphosphatase_AS"/>
</dbReference>
<dbReference type="NCBIfam" id="NF006779">
    <property type="entry name" value="PRK09293.1-3"/>
    <property type="match status" value="1"/>
</dbReference>
<dbReference type="NCBIfam" id="NF006780">
    <property type="entry name" value="PRK09293.1-4"/>
    <property type="match status" value="1"/>
</dbReference>
<dbReference type="PANTHER" id="PTHR11556">
    <property type="entry name" value="FRUCTOSE-1,6-BISPHOSPHATASE-RELATED"/>
    <property type="match status" value="1"/>
</dbReference>
<dbReference type="PANTHER" id="PTHR11556:SF35">
    <property type="entry name" value="SEDOHEPTULOSE-1,7-BISPHOSPHATASE, CHLOROPLASTIC"/>
    <property type="match status" value="1"/>
</dbReference>
<dbReference type="Pfam" id="PF00316">
    <property type="entry name" value="FBPase"/>
    <property type="match status" value="1"/>
</dbReference>
<dbReference type="Pfam" id="PF18913">
    <property type="entry name" value="FBPase_C"/>
    <property type="match status" value="1"/>
</dbReference>
<dbReference type="PIRSF" id="PIRSF500210">
    <property type="entry name" value="FBPtase"/>
    <property type="match status" value="1"/>
</dbReference>
<dbReference type="PIRSF" id="PIRSF000904">
    <property type="entry name" value="FBPtase_SBPase"/>
    <property type="match status" value="1"/>
</dbReference>
<dbReference type="PRINTS" id="PR00115">
    <property type="entry name" value="F16BPHPHTASE"/>
</dbReference>
<dbReference type="SUPFAM" id="SSF56655">
    <property type="entry name" value="Carbohydrate phosphatase"/>
    <property type="match status" value="1"/>
</dbReference>
<dbReference type="PROSITE" id="PS00124">
    <property type="entry name" value="FBPASE"/>
    <property type="match status" value="1"/>
</dbReference>
<protein>
    <recommendedName>
        <fullName evidence="1">Fructose-1,6-bisphosphatase class 1</fullName>
        <shortName evidence="1">FBPase class 1</shortName>
        <ecNumber evidence="1">3.1.3.11</ecNumber>
    </recommendedName>
    <alternativeName>
        <fullName evidence="1">D-fructose-1,6-bisphosphate 1-phosphohydrolase class 1</fullName>
    </alternativeName>
</protein>
<keyword id="KW-0119">Carbohydrate metabolism</keyword>
<keyword id="KW-0963">Cytoplasm</keyword>
<keyword id="KW-0378">Hydrolase</keyword>
<keyword id="KW-0460">Magnesium</keyword>
<keyword id="KW-0479">Metal-binding</keyword>
<evidence type="ECO:0000255" key="1">
    <source>
        <dbReference type="HAMAP-Rule" id="MF_01855"/>
    </source>
</evidence>
<feature type="chain" id="PRO_0000364595" description="Fructose-1,6-bisphosphatase class 1">
    <location>
        <begin position="1"/>
        <end position="356"/>
    </location>
</feature>
<feature type="binding site" evidence="1">
    <location>
        <position position="91"/>
    </location>
    <ligand>
        <name>Mg(2+)</name>
        <dbReference type="ChEBI" id="CHEBI:18420"/>
        <label>1</label>
    </ligand>
</feature>
<feature type="binding site" evidence="1">
    <location>
        <position position="113"/>
    </location>
    <ligand>
        <name>Mg(2+)</name>
        <dbReference type="ChEBI" id="CHEBI:18420"/>
        <label>1</label>
    </ligand>
</feature>
<feature type="binding site" evidence="1">
    <location>
        <position position="113"/>
    </location>
    <ligand>
        <name>Mg(2+)</name>
        <dbReference type="ChEBI" id="CHEBI:18420"/>
        <label>2</label>
    </ligand>
</feature>
<feature type="binding site" evidence="1">
    <location>
        <position position="115"/>
    </location>
    <ligand>
        <name>Mg(2+)</name>
        <dbReference type="ChEBI" id="CHEBI:18420"/>
        <label>1</label>
    </ligand>
</feature>
<feature type="binding site" evidence="1">
    <location>
        <begin position="116"/>
        <end position="119"/>
    </location>
    <ligand>
        <name>substrate</name>
    </ligand>
</feature>
<feature type="binding site" evidence="1">
    <location>
        <position position="116"/>
    </location>
    <ligand>
        <name>Mg(2+)</name>
        <dbReference type="ChEBI" id="CHEBI:18420"/>
        <label>2</label>
    </ligand>
</feature>
<feature type="binding site" evidence="1">
    <location>
        <position position="208"/>
    </location>
    <ligand>
        <name>substrate</name>
    </ligand>
</feature>
<feature type="binding site" evidence="1">
    <location>
        <position position="280"/>
    </location>
    <ligand>
        <name>Mg(2+)</name>
        <dbReference type="ChEBI" id="CHEBI:18420"/>
        <label>2</label>
    </ligand>
</feature>